<name>FANCL_MOUSE</name>
<dbReference type="EC" id="2.3.2.27" evidence="2"/>
<dbReference type="EMBL" id="AF513619">
    <property type="protein sequence ID" value="AAN64921.1"/>
    <property type="molecule type" value="mRNA"/>
</dbReference>
<dbReference type="EMBL" id="AK008605">
    <property type="protein sequence ID" value="BAB25772.1"/>
    <property type="molecule type" value="mRNA"/>
</dbReference>
<dbReference type="EMBL" id="AK011520">
    <property type="protein sequence ID" value="BAB27674.1"/>
    <property type="molecule type" value="mRNA"/>
</dbReference>
<dbReference type="EMBL" id="AK011752">
    <property type="protein sequence ID" value="BAB27820.1"/>
    <property type="molecule type" value="mRNA"/>
</dbReference>
<dbReference type="EMBL" id="AK011903">
    <property type="protein sequence ID" value="BAB27906.1"/>
    <property type="molecule type" value="mRNA"/>
</dbReference>
<dbReference type="EMBL" id="AK018018">
    <property type="protein sequence ID" value="BAB31039.1"/>
    <property type="molecule type" value="mRNA"/>
</dbReference>
<dbReference type="EMBL" id="AK076017">
    <property type="protein sequence ID" value="BAC36123.1"/>
    <property type="molecule type" value="mRNA"/>
</dbReference>
<dbReference type="EMBL" id="AK168538">
    <property type="protein sequence ID" value="BAE40416.1"/>
    <property type="molecule type" value="mRNA"/>
</dbReference>
<dbReference type="EMBL" id="BC066181">
    <property type="protein sequence ID" value="AAH66181.1"/>
    <property type="molecule type" value="mRNA"/>
</dbReference>
<dbReference type="EMBL" id="BC032876">
    <property type="protein sequence ID" value="AAH32876.1"/>
    <property type="molecule type" value="mRNA"/>
</dbReference>
<dbReference type="CCDS" id="CCDS24485.1">
    <molecule id="Q9CR14-1"/>
</dbReference>
<dbReference type="CCDS" id="CCDS70152.1">
    <molecule id="Q9CR14-2"/>
</dbReference>
<dbReference type="RefSeq" id="NP_001264202.1">
    <molecule id="Q9CR14-2"/>
    <property type="nucleotide sequence ID" value="NM_001277273.1"/>
</dbReference>
<dbReference type="RefSeq" id="NP_080199.1">
    <molecule id="Q9CR14-1"/>
    <property type="nucleotide sequence ID" value="NM_025923.3"/>
</dbReference>
<dbReference type="SMR" id="Q9CR14"/>
<dbReference type="BioGRID" id="211887">
    <property type="interactions" value="9"/>
</dbReference>
<dbReference type="FunCoup" id="Q9CR14">
    <property type="interactions" value="3353"/>
</dbReference>
<dbReference type="IntAct" id="Q9CR14">
    <property type="interactions" value="3"/>
</dbReference>
<dbReference type="MINT" id="Q9CR14"/>
<dbReference type="STRING" id="10090.ENSMUSP00000004120"/>
<dbReference type="PhosphoSitePlus" id="Q9CR14"/>
<dbReference type="PaxDb" id="10090-ENSMUSP00000004120"/>
<dbReference type="ProteomicsDB" id="271861">
    <molecule id="Q9CR14-1"/>
</dbReference>
<dbReference type="ProteomicsDB" id="271862">
    <molecule id="Q9CR14-2"/>
</dbReference>
<dbReference type="Pumba" id="Q9CR14"/>
<dbReference type="Antibodypedia" id="30496">
    <property type="antibodies" value="229 antibodies from 31 providers"/>
</dbReference>
<dbReference type="DNASU" id="67030"/>
<dbReference type="Ensembl" id="ENSMUST00000004120.9">
    <molecule id="Q9CR14-1"/>
    <property type="protein sequence ID" value="ENSMUSP00000004120.3"/>
    <property type="gene ID" value="ENSMUSG00000004018.10"/>
</dbReference>
<dbReference type="Ensembl" id="ENSMUST00000109509.8">
    <molecule id="Q9CR14-2"/>
    <property type="protein sequence ID" value="ENSMUSP00000105135.2"/>
    <property type="gene ID" value="ENSMUSG00000004018.10"/>
</dbReference>
<dbReference type="GeneID" id="67030"/>
<dbReference type="KEGG" id="mmu:67030"/>
<dbReference type="UCSC" id="uc007ige.2">
    <molecule id="Q9CR14-1"/>
    <property type="organism name" value="mouse"/>
</dbReference>
<dbReference type="UCSC" id="uc011xsj.2">
    <molecule id="Q9CR14-2"/>
    <property type="organism name" value="mouse"/>
</dbReference>
<dbReference type="AGR" id="MGI:1914280"/>
<dbReference type="CTD" id="55120"/>
<dbReference type="MGI" id="MGI:1914280">
    <property type="gene designation" value="Fancl"/>
</dbReference>
<dbReference type="VEuPathDB" id="HostDB:ENSMUSG00000004018"/>
<dbReference type="eggNOG" id="KOG3268">
    <property type="taxonomic scope" value="Eukaryota"/>
</dbReference>
<dbReference type="GeneTree" id="ENSGT00390000005537"/>
<dbReference type="HOGENOM" id="CLU_045054_0_0_1"/>
<dbReference type="InParanoid" id="Q9CR14"/>
<dbReference type="OMA" id="NRPFHAK"/>
<dbReference type="OrthoDB" id="10263265at2759"/>
<dbReference type="PhylomeDB" id="Q9CR14"/>
<dbReference type="TreeFam" id="TF323571"/>
<dbReference type="Reactome" id="R-MMU-6783310">
    <property type="pathway name" value="Fanconi Anemia Pathway"/>
</dbReference>
<dbReference type="Reactome" id="R-MMU-9833482">
    <property type="pathway name" value="PKR-mediated signaling"/>
</dbReference>
<dbReference type="UniPathway" id="UPA00143"/>
<dbReference type="BioGRID-ORCS" id="67030">
    <property type="hits" value="24 hits in 115 CRISPR screens"/>
</dbReference>
<dbReference type="ChiTaRS" id="Fancl">
    <property type="organism name" value="mouse"/>
</dbReference>
<dbReference type="PRO" id="PR:Q9CR14"/>
<dbReference type="Proteomes" id="UP000000589">
    <property type="component" value="Chromosome 11"/>
</dbReference>
<dbReference type="RNAct" id="Q9CR14">
    <property type="molecule type" value="protein"/>
</dbReference>
<dbReference type="Bgee" id="ENSMUSG00000004018">
    <property type="expression patterns" value="Expressed in dorsal pancreas and 254 other cell types or tissues"/>
</dbReference>
<dbReference type="ExpressionAtlas" id="Q9CR14">
    <property type="expression patterns" value="baseline and differential"/>
</dbReference>
<dbReference type="GO" id="GO:0000785">
    <property type="term" value="C:chromatin"/>
    <property type="evidence" value="ECO:0007669"/>
    <property type="project" value="Ensembl"/>
</dbReference>
<dbReference type="GO" id="GO:0005737">
    <property type="term" value="C:cytoplasm"/>
    <property type="evidence" value="ECO:0007669"/>
    <property type="project" value="UniProtKB-SubCell"/>
</dbReference>
<dbReference type="GO" id="GO:0043240">
    <property type="term" value="C:Fanconi anaemia nuclear complex"/>
    <property type="evidence" value="ECO:0000250"/>
    <property type="project" value="UniProtKB"/>
</dbReference>
<dbReference type="GO" id="GO:0016604">
    <property type="term" value="C:nuclear body"/>
    <property type="evidence" value="ECO:0007669"/>
    <property type="project" value="Ensembl"/>
</dbReference>
<dbReference type="GO" id="GO:0005635">
    <property type="term" value="C:nuclear envelope"/>
    <property type="evidence" value="ECO:0000353"/>
    <property type="project" value="MGI"/>
</dbReference>
<dbReference type="GO" id="GO:0061630">
    <property type="term" value="F:ubiquitin protein ligase activity"/>
    <property type="evidence" value="ECO:0000314"/>
    <property type="project" value="MGI"/>
</dbReference>
<dbReference type="GO" id="GO:0031625">
    <property type="term" value="F:ubiquitin protein ligase binding"/>
    <property type="evidence" value="ECO:0007669"/>
    <property type="project" value="Ensembl"/>
</dbReference>
<dbReference type="GO" id="GO:0004842">
    <property type="term" value="F:ubiquitin-protein transferase activity"/>
    <property type="evidence" value="ECO:0000314"/>
    <property type="project" value="UniProtKB"/>
</dbReference>
<dbReference type="GO" id="GO:0008270">
    <property type="term" value="F:zinc ion binding"/>
    <property type="evidence" value="ECO:0007669"/>
    <property type="project" value="UniProtKB-KW"/>
</dbReference>
<dbReference type="GO" id="GO:0006974">
    <property type="term" value="P:DNA damage response"/>
    <property type="evidence" value="ECO:0000250"/>
    <property type="project" value="UniProtKB"/>
</dbReference>
<dbReference type="GO" id="GO:0006281">
    <property type="term" value="P:DNA repair"/>
    <property type="evidence" value="ECO:0000250"/>
    <property type="project" value="UniProtKB"/>
</dbReference>
<dbReference type="GO" id="GO:0007276">
    <property type="term" value="P:gamete generation"/>
    <property type="evidence" value="ECO:0000315"/>
    <property type="project" value="MGI"/>
</dbReference>
<dbReference type="GO" id="GO:0036297">
    <property type="term" value="P:interstrand cross-link repair"/>
    <property type="evidence" value="ECO:0007669"/>
    <property type="project" value="InterPro"/>
</dbReference>
<dbReference type="GO" id="GO:0006513">
    <property type="term" value="P:protein monoubiquitination"/>
    <property type="evidence" value="ECO:0000250"/>
    <property type="project" value="UniProtKB"/>
</dbReference>
<dbReference type="GO" id="GO:0042127">
    <property type="term" value="P:regulation of cell population proliferation"/>
    <property type="evidence" value="ECO:0000315"/>
    <property type="project" value="MGI"/>
</dbReference>
<dbReference type="CDD" id="cd23832">
    <property type="entry name" value="DRWD-C_FANCL"/>
    <property type="match status" value="1"/>
</dbReference>
<dbReference type="CDD" id="cd23831">
    <property type="entry name" value="DRWD-N_FANCL"/>
    <property type="match status" value="1"/>
</dbReference>
<dbReference type="CDD" id="cd23786">
    <property type="entry name" value="ELF_FANCL"/>
    <property type="match status" value="1"/>
</dbReference>
<dbReference type="CDD" id="cd16490">
    <property type="entry name" value="RING-CH-C4HC3_FANCL"/>
    <property type="match status" value="1"/>
</dbReference>
<dbReference type="FunFam" id="3.10.110.10:FF:000081">
    <property type="entry name" value="E3 ubiquitin-protein ligase FANCL"/>
    <property type="match status" value="1"/>
</dbReference>
<dbReference type="FunFam" id="3.10.110.20:FF:000001">
    <property type="entry name" value="E3 ubiquitin-protein ligase FANCL"/>
    <property type="match status" value="1"/>
</dbReference>
<dbReference type="FunFam" id="3.30.40.10:FF:000221">
    <property type="entry name" value="E3 ubiquitin-protein ligase FANCL isoform X2"/>
    <property type="match status" value="1"/>
</dbReference>
<dbReference type="Gene3D" id="3.10.110.20">
    <property type="entry name" value="RWD domain-like"/>
    <property type="match status" value="1"/>
</dbReference>
<dbReference type="Gene3D" id="3.10.110.10">
    <property type="entry name" value="Ubiquitin Conjugating Enzyme"/>
    <property type="match status" value="1"/>
</dbReference>
<dbReference type="Gene3D" id="3.30.40.10">
    <property type="entry name" value="Zinc/RING finger domain, C3HC4 (zinc finger)"/>
    <property type="match status" value="1"/>
</dbReference>
<dbReference type="InterPro" id="IPR026848">
    <property type="entry name" value="Fancl"/>
</dbReference>
<dbReference type="InterPro" id="IPR026850">
    <property type="entry name" value="FANCL_C"/>
</dbReference>
<dbReference type="InterPro" id="IPR043898">
    <property type="entry name" value="FANCL_d2"/>
</dbReference>
<dbReference type="InterPro" id="IPR044037">
    <property type="entry name" value="FANCL_d3"/>
</dbReference>
<dbReference type="InterPro" id="IPR043003">
    <property type="entry name" value="FANCL_d3_sf"/>
</dbReference>
<dbReference type="InterPro" id="IPR019162">
    <property type="entry name" value="FancL_WD-rpt_cont_dom"/>
</dbReference>
<dbReference type="InterPro" id="IPR016135">
    <property type="entry name" value="UBQ-conjugating_enzyme/RWD"/>
</dbReference>
<dbReference type="InterPro" id="IPR013083">
    <property type="entry name" value="Znf_RING/FYVE/PHD"/>
</dbReference>
<dbReference type="PANTHER" id="PTHR13206:SF0">
    <property type="entry name" value="E3 UBIQUITIN-PROTEIN LIGASE FANCL"/>
    <property type="match status" value="1"/>
</dbReference>
<dbReference type="PANTHER" id="PTHR13206">
    <property type="entry name" value="UBIQUITIN LIGASE PROTEIN PHF9 FANCONI ANEMIA GROUP L PROTEIN"/>
    <property type="match status" value="1"/>
</dbReference>
<dbReference type="Pfam" id="PF11793">
    <property type="entry name" value="FANCL_C"/>
    <property type="match status" value="1"/>
</dbReference>
<dbReference type="Pfam" id="PF09765">
    <property type="entry name" value="FANCL_d1"/>
    <property type="match status" value="1"/>
</dbReference>
<dbReference type="Pfam" id="PF18890">
    <property type="entry name" value="FANCL_d2"/>
    <property type="match status" value="1"/>
</dbReference>
<dbReference type="Pfam" id="PF18891">
    <property type="entry name" value="FANCL_d3"/>
    <property type="match status" value="1"/>
</dbReference>
<dbReference type="SMART" id="SM01197">
    <property type="entry name" value="FANCL_C"/>
    <property type="match status" value="1"/>
</dbReference>
<dbReference type="SUPFAM" id="SSF57850">
    <property type="entry name" value="RING/U-box"/>
    <property type="match status" value="1"/>
</dbReference>
<evidence type="ECO:0000250" key="1"/>
<evidence type="ECO:0000250" key="2">
    <source>
        <dbReference type="UniProtKB" id="Q9NW38"/>
    </source>
</evidence>
<evidence type="ECO:0000255" key="3">
    <source>
        <dbReference type="PROSITE-ProRule" id="PRU00175"/>
    </source>
</evidence>
<evidence type="ECO:0000269" key="4">
    <source>
    </source>
</evidence>
<evidence type="ECO:0000269" key="5">
    <source>
    </source>
</evidence>
<evidence type="ECO:0000269" key="6">
    <source>
    </source>
</evidence>
<evidence type="ECO:0000269" key="7">
    <source>
    </source>
</evidence>
<evidence type="ECO:0000303" key="8">
    <source>
    </source>
</evidence>
<evidence type="ECO:0000305" key="9"/>
<keyword id="KW-0025">Alternative splicing</keyword>
<keyword id="KW-0963">Cytoplasm</keyword>
<keyword id="KW-0227">DNA damage</keyword>
<keyword id="KW-0234">DNA repair</keyword>
<keyword id="KW-0479">Metal-binding</keyword>
<keyword id="KW-0539">Nucleus</keyword>
<keyword id="KW-1185">Reference proteome</keyword>
<keyword id="KW-0808">Transferase</keyword>
<keyword id="KW-0832">Ubl conjugation</keyword>
<keyword id="KW-0833">Ubl conjugation pathway</keyword>
<keyword id="KW-0862">Zinc</keyword>
<keyword id="KW-0863">Zinc-finger</keyword>
<feature type="chain" id="PRO_0000055909" description="E3 ubiquitin-protein ligase FANCL">
    <location>
        <begin position="1"/>
        <end position="375"/>
    </location>
</feature>
<feature type="zinc finger region" description="RING-type; degenerate" evidence="3">
    <location>
        <begin position="307"/>
        <end position="363"/>
    </location>
</feature>
<feature type="region of interest" description="UBC-RWD region (URD)" evidence="1">
    <location>
        <begin position="104"/>
        <end position="294"/>
    </location>
</feature>
<feature type="splice variant" id="VSP_008552" description="In isoform 2." evidence="8">
    <original>WDPENS</original>
    <variation>C</variation>
    <location>
        <begin position="274"/>
        <end position="279"/>
    </location>
</feature>
<feature type="sequence conflict" description="In Ref. 2; BAB27906." evidence="9" ref="2">
    <original>L</original>
    <variation>I</variation>
    <location>
        <position position="230"/>
    </location>
</feature>
<proteinExistence type="evidence at protein level"/>
<reference key="1">
    <citation type="journal article" date="2002" name="Hum. Mol. Genet.">
        <title>A novel gene, Pog, is necessary for primordial germ cell proliferation in the mouse and underlies the germ cell deficient mutation, gcd.</title>
        <authorList>
            <person name="Agoulnik A.I."/>
            <person name="Lu B."/>
            <person name="Zhu Q."/>
            <person name="Truong C."/>
            <person name="Ty M.T."/>
            <person name="Arango N."/>
            <person name="Chada K.K."/>
            <person name="Bishop C.E."/>
        </authorList>
    </citation>
    <scope>NUCLEOTIDE SEQUENCE [MRNA] (ISOFORM 1)</scope>
    <scope>FUNCTION</scope>
    <source>
        <strain>C57BL/6J</strain>
    </source>
</reference>
<reference key="2">
    <citation type="journal article" date="2005" name="Science">
        <title>The transcriptional landscape of the mammalian genome.</title>
        <authorList>
            <person name="Carninci P."/>
            <person name="Kasukawa T."/>
            <person name="Katayama S."/>
            <person name="Gough J."/>
            <person name="Frith M.C."/>
            <person name="Maeda N."/>
            <person name="Oyama R."/>
            <person name="Ravasi T."/>
            <person name="Lenhard B."/>
            <person name="Wells C."/>
            <person name="Kodzius R."/>
            <person name="Shimokawa K."/>
            <person name="Bajic V.B."/>
            <person name="Brenner S.E."/>
            <person name="Batalov S."/>
            <person name="Forrest A.R."/>
            <person name="Zavolan M."/>
            <person name="Davis M.J."/>
            <person name="Wilming L.G."/>
            <person name="Aidinis V."/>
            <person name="Allen J.E."/>
            <person name="Ambesi-Impiombato A."/>
            <person name="Apweiler R."/>
            <person name="Aturaliya R.N."/>
            <person name="Bailey T.L."/>
            <person name="Bansal M."/>
            <person name="Baxter L."/>
            <person name="Beisel K.W."/>
            <person name="Bersano T."/>
            <person name="Bono H."/>
            <person name="Chalk A.M."/>
            <person name="Chiu K.P."/>
            <person name="Choudhary V."/>
            <person name="Christoffels A."/>
            <person name="Clutterbuck D.R."/>
            <person name="Crowe M.L."/>
            <person name="Dalla E."/>
            <person name="Dalrymple B.P."/>
            <person name="de Bono B."/>
            <person name="Della Gatta G."/>
            <person name="di Bernardo D."/>
            <person name="Down T."/>
            <person name="Engstrom P."/>
            <person name="Fagiolini M."/>
            <person name="Faulkner G."/>
            <person name="Fletcher C.F."/>
            <person name="Fukushima T."/>
            <person name="Furuno M."/>
            <person name="Futaki S."/>
            <person name="Gariboldi M."/>
            <person name="Georgii-Hemming P."/>
            <person name="Gingeras T.R."/>
            <person name="Gojobori T."/>
            <person name="Green R.E."/>
            <person name="Gustincich S."/>
            <person name="Harbers M."/>
            <person name="Hayashi Y."/>
            <person name="Hensch T.K."/>
            <person name="Hirokawa N."/>
            <person name="Hill D."/>
            <person name="Huminiecki L."/>
            <person name="Iacono M."/>
            <person name="Ikeo K."/>
            <person name="Iwama A."/>
            <person name="Ishikawa T."/>
            <person name="Jakt M."/>
            <person name="Kanapin A."/>
            <person name="Katoh M."/>
            <person name="Kawasawa Y."/>
            <person name="Kelso J."/>
            <person name="Kitamura H."/>
            <person name="Kitano H."/>
            <person name="Kollias G."/>
            <person name="Krishnan S.P."/>
            <person name="Kruger A."/>
            <person name="Kummerfeld S.K."/>
            <person name="Kurochkin I.V."/>
            <person name="Lareau L.F."/>
            <person name="Lazarevic D."/>
            <person name="Lipovich L."/>
            <person name="Liu J."/>
            <person name="Liuni S."/>
            <person name="McWilliam S."/>
            <person name="Madan Babu M."/>
            <person name="Madera M."/>
            <person name="Marchionni L."/>
            <person name="Matsuda H."/>
            <person name="Matsuzawa S."/>
            <person name="Miki H."/>
            <person name="Mignone F."/>
            <person name="Miyake S."/>
            <person name="Morris K."/>
            <person name="Mottagui-Tabar S."/>
            <person name="Mulder N."/>
            <person name="Nakano N."/>
            <person name="Nakauchi H."/>
            <person name="Ng P."/>
            <person name="Nilsson R."/>
            <person name="Nishiguchi S."/>
            <person name="Nishikawa S."/>
            <person name="Nori F."/>
            <person name="Ohara O."/>
            <person name="Okazaki Y."/>
            <person name="Orlando V."/>
            <person name="Pang K.C."/>
            <person name="Pavan W.J."/>
            <person name="Pavesi G."/>
            <person name="Pesole G."/>
            <person name="Petrovsky N."/>
            <person name="Piazza S."/>
            <person name="Reed J."/>
            <person name="Reid J.F."/>
            <person name="Ring B.Z."/>
            <person name="Ringwald M."/>
            <person name="Rost B."/>
            <person name="Ruan Y."/>
            <person name="Salzberg S.L."/>
            <person name="Sandelin A."/>
            <person name="Schneider C."/>
            <person name="Schoenbach C."/>
            <person name="Sekiguchi K."/>
            <person name="Semple C.A."/>
            <person name="Seno S."/>
            <person name="Sessa L."/>
            <person name="Sheng Y."/>
            <person name="Shibata Y."/>
            <person name="Shimada H."/>
            <person name="Shimada K."/>
            <person name="Silva D."/>
            <person name="Sinclair B."/>
            <person name="Sperling S."/>
            <person name="Stupka E."/>
            <person name="Sugiura K."/>
            <person name="Sultana R."/>
            <person name="Takenaka Y."/>
            <person name="Taki K."/>
            <person name="Tammoja K."/>
            <person name="Tan S.L."/>
            <person name="Tang S."/>
            <person name="Taylor M.S."/>
            <person name="Tegner J."/>
            <person name="Teichmann S.A."/>
            <person name="Ueda H.R."/>
            <person name="van Nimwegen E."/>
            <person name="Verardo R."/>
            <person name="Wei C.L."/>
            <person name="Yagi K."/>
            <person name="Yamanishi H."/>
            <person name="Zabarovsky E."/>
            <person name="Zhu S."/>
            <person name="Zimmer A."/>
            <person name="Hide W."/>
            <person name="Bult C."/>
            <person name="Grimmond S.M."/>
            <person name="Teasdale R.D."/>
            <person name="Liu E.T."/>
            <person name="Brusic V."/>
            <person name="Quackenbush J."/>
            <person name="Wahlestedt C."/>
            <person name="Mattick J.S."/>
            <person name="Hume D.A."/>
            <person name="Kai C."/>
            <person name="Sasaki D."/>
            <person name="Tomaru Y."/>
            <person name="Fukuda S."/>
            <person name="Kanamori-Katayama M."/>
            <person name="Suzuki M."/>
            <person name="Aoki J."/>
            <person name="Arakawa T."/>
            <person name="Iida J."/>
            <person name="Imamura K."/>
            <person name="Itoh M."/>
            <person name="Kato T."/>
            <person name="Kawaji H."/>
            <person name="Kawagashira N."/>
            <person name="Kawashima T."/>
            <person name="Kojima M."/>
            <person name="Kondo S."/>
            <person name="Konno H."/>
            <person name="Nakano K."/>
            <person name="Ninomiya N."/>
            <person name="Nishio T."/>
            <person name="Okada M."/>
            <person name="Plessy C."/>
            <person name="Shibata K."/>
            <person name="Shiraki T."/>
            <person name="Suzuki S."/>
            <person name="Tagami M."/>
            <person name="Waki K."/>
            <person name="Watahiki A."/>
            <person name="Okamura-Oho Y."/>
            <person name="Suzuki H."/>
            <person name="Kawai J."/>
            <person name="Hayashizaki Y."/>
        </authorList>
    </citation>
    <scope>NUCLEOTIDE SEQUENCE [LARGE SCALE MRNA] (ISOFORMS 1 AND 2)</scope>
    <source>
        <strain>C57BL/6J</strain>
        <tissue>Embryo</tissue>
        <tissue>Kidney</tissue>
        <tissue>Small intestine</tissue>
        <tissue>Thymus</tissue>
    </source>
</reference>
<reference key="3">
    <citation type="journal article" date="2004" name="Genome Res.">
        <title>The status, quality, and expansion of the NIH full-length cDNA project: the Mammalian Gene Collection (MGC).</title>
        <authorList>
            <consortium name="The MGC Project Team"/>
        </authorList>
    </citation>
    <scope>NUCLEOTIDE SEQUENCE [LARGE SCALE MRNA] (ISOFORM 1)</scope>
    <source>
        <strain>C57BL/6J</strain>
        <tissue>Pancreas</tissue>
        <tissue>Thymus</tissue>
    </source>
</reference>
<reference key="4">
    <citation type="journal article" date="2003" name="Biol. Reprod.">
        <title>Late onset of spermatogenesis and gain of fertility in POG-deficient mice indicate that POG is not necessary for the proliferation of spermatogonia.</title>
        <authorList>
            <person name="Lu B."/>
            <person name="Bishop C.E."/>
        </authorList>
    </citation>
    <scope>FUNCTION</scope>
</reference>
<reference key="5">
    <citation type="journal article" date="2003" name="J. Biol. Chem.">
        <title>Mouse GGN1 and GGN3, two germ cell-specific proteins from the single gene Ggn, interact with mouse POG and play a role in spermatogenesis.</title>
        <authorList>
            <person name="Lu B."/>
            <person name="Bishop C.E."/>
        </authorList>
    </citation>
    <scope>INTERACTION WITH GGN</scope>
</reference>
<reference key="6">
    <citation type="journal article" date="2011" name="Mol. Cells">
        <title>UBE2W interacts with FANCL and regulates the monoubiquitination of Fanconi anemia protein FANCD2.</title>
        <authorList>
            <person name="Zhang Y."/>
            <person name="Zhou X."/>
            <person name="Zhao L."/>
            <person name="Li C."/>
            <person name="Zhu H."/>
            <person name="Xu L."/>
            <person name="Shan L."/>
            <person name="Liao X."/>
            <person name="Guo Z."/>
            <person name="Huang P."/>
        </authorList>
    </citation>
    <scope>INTERACTION WITH UBE2W</scope>
    <scope>SUBCELLULAR LOCATION</scope>
</reference>
<gene>
    <name type="primary">Fancl</name>
    <name type="synonym">Phf9</name>
    <name type="synonym">Pog</name>
</gene>
<accession>Q9CR14</accession>
<accession>Q3TGY2</accession>
<accession>Q9D017</accession>
<sequence>MDEAEASLLRHFPLLLPQNREKTVYEGFISAQGSDFHLRIVLPKDLQLKKARLLCSLQLKNILNEYHQVVQQRMKHSPDLMSFMMELKMILEVALKNKQELCVQPPSCSFCKDLLTEIGAIGWDKLACVESSFSTIKLKADDASGRKHLITVKLKAKYPVEPPDCVVDFPVPFSVSWTPQSSLVDVYSQFLVALETLKVFWDVMDEIDEKTWVLEPEKPPRSATARRIALGKNVSIAIEVDPRHPTMLPEFCFLGADHVTKPLGMKLSGSIHLWDPENSLLQNLKDVLEIDFPARSILEESDFSMDCGICYARHLNGAIPDQVCNNPQCGQPFHEICLYEWLRGLSTSRQSFNVFFGDCPYCSKPITLKMSGRKP</sequence>
<protein>
    <recommendedName>
        <fullName>E3 ubiquitin-protein ligase FANCL</fullName>
        <ecNumber evidence="2">2.3.2.27</ecNumber>
    </recommendedName>
    <alternativeName>
        <fullName>Fanconi anemia group L protein homolog</fullName>
    </alternativeName>
    <alternativeName>
        <fullName>Proliferation of germ cells protein</fullName>
    </alternativeName>
    <alternativeName>
        <fullName evidence="9">RING-type E3 ubiquitin transferase FANCL</fullName>
    </alternativeName>
</protein>
<comment type="function">
    <text evidence="4 6">Ubiquitin ligase protein that mediates monoubiquitination of FANCD2, a key step in the DNA damage pathway. Also mediates monoubiquitination of FANCI. May stimulate the ubiquitin release from UBE2W. May be required for proper primordial germ cell proliferation in the embryonic stage, whereas it is probably not needed for spermatogonial proliferation after birth.</text>
</comment>
<comment type="catalytic activity">
    <reaction evidence="2">
        <text>S-ubiquitinyl-[E2 ubiquitin-conjugating enzyme]-L-cysteine + [acceptor protein]-L-lysine = [E2 ubiquitin-conjugating enzyme]-L-cysteine + N(6)-ubiquitinyl-[acceptor protein]-L-lysine.</text>
        <dbReference type="EC" id="2.3.2.27"/>
    </reaction>
</comment>
<comment type="pathway">
    <text>Protein modification; protein ubiquitination.</text>
</comment>
<comment type="subunit">
    <text evidence="2 5 7">Belongs to the multisubunit FA complex composed of FANCA, FANCB, FANCC, FANCE, FANCF, FANCG, FANCL/PHF9 and FANCM (By similarity). In complex with FANCF, FANCA and FANCG, but not with FANCC, nor FANCE, interacts with HES1; this interaction may be essential for the stability and nuclear localization of FA core complex proteins. Interacts with FANCI (By similarity). Interacts with GGN. Interacts (via the RING-type zinc finger) with UBE2T and UBE2W.</text>
</comment>
<comment type="subcellular location">
    <subcellularLocation>
        <location evidence="7">Cytoplasm</location>
    </subcellularLocation>
    <subcellularLocation>
        <location evidence="7">Nucleus</location>
    </subcellularLocation>
    <text>In the nucleus, colocalizes with UBE2W.</text>
</comment>
<comment type="alternative products">
    <event type="alternative splicing"/>
    <isoform>
        <id>Q9CR14-1</id>
        <name>1</name>
        <sequence type="displayed"/>
    </isoform>
    <isoform>
        <id>Q9CR14-2</id>
        <name>2</name>
        <sequence type="described" ref="VSP_008552"/>
    </isoform>
</comment>
<comment type="domain">
    <text evidence="2">The UBC-RWD region (URD) region mediates interaction with FANCI and FANCD2.</text>
</comment>
<comment type="PTM">
    <text>The RING-type zinc finger domain is monoubiquitinated in the presence of UBE2T and UBE2W.</text>
</comment>
<comment type="disease">
    <text>Defects in Fancl are a cause of the gcd (germ cell deficient) mutant phenotype, which leads to reduced numbers of precursor germ cells and adult sterility, probably due to a reduced precursor germ cells proliferation.</text>
</comment>
<comment type="caution">
    <text evidence="9">Despite its name, it does not contain a PHD-type zinc finger, but contains a RING-type zinc finger. Moreover, PHD-type zinc fingers do not have any ubiquitin ligase activity.</text>
</comment>
<organism>
    <name type="scientific">Mus musculus</name>
    <name type="common">Mouse</name>
    <dbReference type="NCBI Taxonomy" id="10090"/>
    <lineage>
        <taxon>Eukaryota</taxon>
        <taxon>Metazoa</taxon>
        <taxon>Chordata</taxon>
        <taxon>Craniata</taxon>
        <taxon>Vertebrata</taxon>
        <taxon>Euteleostomi</taxon>
        <taxon>Mammalia</taxon>
        <taxon>Eutheria</taxon>
        <taxon>Euarchontoglires</taxon>
        <taxon>Glires</taxon>
        <taxon>Rodentia</taxon>
        <taxon>Myomorpha</taxon>
        <taxon>Muroidea</taxon>
        <taxon>Muridae</taxon>
        <taxon>Murinae</taxon>
        <taxon>Mus</taxon>
        <taxon>Mus</taxon>
    </lineage>
</organism>